<reference key="1">
    <citation type="journal article" date="1998" name="Science">
        <title>Genome sequence of the nematode C. elegans: a platform for investigating biology.</title>
        <authorList>
            <consortium name="The C. elegans sequencing consortium"/>
        </authorList>
    </citation>
    <scope>NUCLEOTIDE SEQUENCE [LARGE SCALE GENOMIC DNA]</scope>
    <source>
        <strain>Bristol N2</strain>
    </source>
</reference>
<organism>
    <name type="scientific">Caenorhabditis elegans</name>
    <dbReference type="NCBI Taxonomy" id="6239"/>
    <lineage>
        <taxon>Eukaryota</taxon>
        <taxon>Metazoa</taxon>
        <taxon>Ecdysozoa</taxon>
        <taxon>Nematoda</taxon>
        <taxon>Chromadorea</taxon>
        <taxon>Rhabditida</taxon>
        <taxon>Rhabditina</taxon>
        <taxon>Rhabditomorpha</taxon>
        <taxon>Rhabditoidea</taxon>
        <taxon>Rhabditidae</taxon>
        <taxon>Peloderinae</taxon>
        <taxon>Caenorhabditis</taxon>
    </lineage>
</organism>
<protein>
    <recommendedName>
        <fullName>Uncharacterized protein ZK1307.1</fullName>
    </recommendedName>
</protein>
<feature type="chain" id="PRO_0000065569" description="Uncharacterized protein ZK1307.1">
    <location>
        <begin position="1"/>
        <end position="279"/>
    </location>
</feature>
<dbReference type="EMBL" id="Z47358">
    <property type="protein sequence ID" value="CAA87437.1"/>
    <property type="molecule type" value="Genomic_DNA"/>
</dbReference>
<dbReference type="PIR" id="T27734">
    <property type="entry name" value="T27734"/>
</dbReference>
<dbReference type="RefSeq" id="NP_001022509.1">
    <property type="nucleotide sequence ID" value="NM_001027338.7"/>
</dbReference>
<dbReference type="SMR" id="Q09359"/>
<dbReference type="BioGRID" id="39842">
    <property type="interactions" value="14"/>
</dbReference>
<dbReference type="STRING" id="6239.ZK1307.1a.1"/>
<dbReference type="iPTMnet" id="Q09359"/>
<dbReference type="PaxDb" id="6239-ZK1307.1a"/>
<dbReference type="PeptideAtlas" id="Q09359"/>
<dbReference type="EnsemblMetazoa" id="ZK1307.1a.1">
    <property type="protein sequence ID" value="ZK1307.1a.1"/>
    <property type="gene ID" value="WBGene00014244"/>
</dbReference>
<dbReference type="GeneID" id="174519"/>
<dbReference type="KEGG" id="cel:CELE_ZK1307.1"/>
<dbReference type="UCSC" id="ZK1307.1a">
    <property type="organism name" value="c. elegans"/>
</dbReference>
<dbReference type="AGR" id="WB:WBGene00014244"/>
<dbReference type="CTD" id="174519"/>
<dbReference type="WormBase" id="ZK1307.1a">
    <property type="protein sequence ID" value="CE01690"/>
    <property type="gene ID" value="WBGene00014244"/>
</dbReference>
<dbReference type="eggNOG" id="ENOG502RZJG">
    <property type="taxonomic scope" value="Eukaryota"/>
</dbReference>
<dbReference type="HOGENOM" id="CLU_057463_0_0_1"/>
<dbReference type="InParanoid" id="Q09359"/>
<dbReference type="OMA" id="GGAKCCT"/>
<dbReference type="OrthoDB" id="5912827at2759"/>
<dbReference type="PhylomeDB" id="Q09359"/>
<dbReference type="PRO" id="PR:Q09359"/>
<dbReference type="Proteomes" id="UP000001940">
    <property type="component" value="Chromosome II"/>
</dbReference>
<dbReference type="Bgee" id="WBGene00014244">
    <property type="expression patterns" value="Expressed in larva and 4 other cell types or tissues"/>
</dbReference>
<dbReference type="Gene3D" id="3.75.10.10">
    <property type="entry name" value="L-arginine/glycine Amidinotransferase, Chain A"/>
    <property type="match status" value="1"/>
</dbReference>
<dbReference type="PANTHER" id="PTHR47271">
    <property type="entry name" value="ARGININE DEIMINASE"/>
    <property type="match status" value="1"/>
</dbReference>
<dbReference type="PANTHER" id="PTHR47271:SF2">
    <property type="entry name" value="ARGININE DEIMINASE"/>
    <property type="match status" value="1"/>
</dbReference>
<dbReference type="Pfam" id="PF19420">
    <property type="entry name" value="DDAH_eukar"/>
    <property type="match status" value="1"/>
</dbReference>
<dbReference type="SUPFAM" id="SSF55909">
    <property type="entry name" value="Pentein"/>
    <property type="match status" value="1"/>
</dbReference>
<keyword id="KW-1185">Reference proteome</keyword>
<accession>Q09359</accession>
<proteinExistence type="predicted"/>
<name>YS11_CAEEL</name>
<sequence>MSDSETMSAAKSAAHILKRVLMVPPKHFTVEYTINPWMGGVVDKQKAHQQWNSLKSAIENAGVPVLTMEQTEGLPDQVFVCNSGLVYDDQVYLSRFRHKERSGEQPLYLEWFKKNNIKTIGEGYEEIFEGGGDAVFSDRKTLWAGYGERSSKSVYEKIKALGTFDIVLCDMILPNFYHLDTCFAPVDETSALYYPPAFSEATNKEILRRLPNSIAVSEAEANAFVCNAITIRDTVISPIGVSQATKDYLSARGKRVEEVDMSEFMKSGGACQCLVLRLL</sequence>
<gene>
    <name type="ORF">ZK1307.1</name>
</gene>